<evidence type="ECO:0000255" key="1">
    <source>
        <dbReference type="HAMAP-Rule" id="MF_00179"/>
    </source>
</evidence>
<sequence>MQLKRVAEAKLPTPWGDFLMVGFEELATGHDHVALVYGDISGHTPVLARVHSECLTGDALFSLRCDCGFQLEAALTQIAEEGRGILLYHRQEGRNIGLLNKIRAYALQDQGYDTVEANHQLGFAADERDFTLCADMFKLLGVNEVRLLTNNPKKVEILTEAGINIIERVPLIVGRNPNNEHYLDTKAEKMGHLLNK</sequence>
<protein>
    <recommendedName>
        <fullName evidence="1">GTP cyclohydrolase-2</fullName>
        <ecNumber evidence="1">3.5.4.25</ecNumber>
    </recommendedName>
    <alternativeName>
        <fullName evidence="1">GTP cyclohydrolase II</fullName>
    </alternativeName>
</protein>
<reference key="1">
    <citation type="journal article" date="2009" name="PLoS Genet.">
        <title>Organised genome dynamics in the Escherichia coli species results in highly diverse adaptive paths.</title>
        <authorList>
            <person name="Touchon M."/>
            <person name="Hoede C."/>
            <person name="Tenaillon O."/>
            <person name="Barbe V."/>
            <person name="Baeriswyl S."/>
            <person name="Bidet P."/>
            <person name="Bingen E."/>
            <person name="Bonacorsi S."/>
            <person name="Bouchier C."/>
            <person name="Bouvet O."/>
            <person name="Calteau A."/>
            <person name="Chiapello H."/>
            <person name="Clermont O."/>
            <person name="Cruveiller S."/>
            <person name="Danchin A."/>
            <person name="Diard M."/>
            <person name="Dossat C."/>
            <person name="Karoui M.E."/>
            <person name="Frapy E."/>
            <person name="Garry L."/>
            <person name="Ghigo J.M."/>
            <person name="Gilles A.M."/>
            <person name="Johnson J."/>
            <person name="Le Bouguenec C."/>
            <person name="Lescat M."/>
            <person name="Mangenot S."/>
            <person name="Martinez-Jehanne V."/>
            <person name="Matic I."/>
            <person name="Nassif X."/>
            <person name="Oztas S."/>
            <person name="Petit M.A."/>
            <person name="Pichon C."/>
            <person name="Rouy Z."/>
            <person name="Ruf C.S."/>
            <person name="Schneider D."/>
            <person name="Tourret J."/>
            <person name="Vacherie B."/>
            <person name="Vallenet D."/>
            <person name="Medigue C."/>
            <person name="Rocha E.P.C."/>
            <person name="Denamur E."/>
        </authorList>
    </citation>
    <scope>NUCLEOTIDE SEQUENCE [LARGE SCALE GENOMIC DNA]</scope>
    <source>
        <strain>S88 / ExPEC</strain>
    </source>
</reference>
<gene>
    <name evidence="1" type="primary">ribA</name>
    <name type="ordered locus">ECS88_1417</name>
</gene>
<organism>
    <name type="scientific">Escherichia coli O45:K1 (strain S88 / ExPEC)</name>
    <dbReference type="NCBI Taxonomy" id="585035"/>
    <lineage>
        <taxon>Bacteria</taxon>
        <taxon>Pseudomonadati</taxon>
        <taxon>Pseudomonadota</taxon>
        <taxon>Gammaproteobacteria</taxon>
        <taxon>Enterobacterales</taxon>
        <taxon>Enterobacteriaceae</taxon>
        <taxon>Escherichia</taxon>
    </lineage>
</organism>
<feature type="chain" id="PRO_1000118426" description="GTP cyclohydrolase-2">
    <location>
        <begin position="1"/>
        <end position="196"/>
    </location>
</feature>
<feature type="active site" description="Proton acceptor" evidence="1">
    <location>
        <position position="126"/>
    </location>
</feature>
<feature type="active site" description="Nucleophile" evidence="1">
    <location>
        <position position="128"/>
    </location>
</feature>
<feature type="binding site" evidence="1">
    <location>
        <begin position="49"/>
        <end position="53"/>
    </location>
    <ligand>
        <name>GTP</name>
        <dbReference type="ChEBI" id="CHEBI:37565"/>
    </ligand>
</feature>
<feature type="binding site" evidence="1">
    <location>
        <position position="54"/>
    </location>
    <ligand>
        <name>Zn(2+)</name>
        <dbReference type="ChEBI" id="CHEBI:29105"/>
        <note>catalytic</note>
    </ligand>
</feature>
<feature type="binding site" evidence="1">
    <location>
        <position position="65"/>
    </location>
    <ligand>
        <name>Zn(2+)</name>
        <dbReference type="ChEBI" id="CHEBI:29105"/>
        <note>catalytic</note>
    </ligand>
</feature>
<feature type="binding site" evidence="1">
    <location>
        <position position="67"/>
    </location>
    <ligand>
        <name>Zn(2+)</name>
        <dbReference type="ChEBI" id="CHEBI:29105"/>
        <note>catalytic</note>
    </ligand>
</feature>
<feature type="binding site" evidence="1">
    <location>
        <position position="70"/>
    </location>
    <ligand>
        <name>GTP</name>
        <dbReference type="ChEBI" id="CHEBI:37565"/>
    </ligand>
</feature>
<feature type="binding site" evidence="1">
    <location>
        <begin position="92"/>
        <end position="94"/>
    </location>
    <ligand>
        <name>GTP</name>
        <dbReference type="ChEBI" id="CHEBI:37565"/>
    </ligand>
</feature>
<feature type="binding site" evidence="1">
    <location>
        <position position="114"/>
    </location>
    <ligand>
        <name>GTP</name>
        <dbReference type="ChEBI" id="CHEBI:37565"/>
    </ligand>
</feature>
<feature type="binding site" evidence="1">
    <location>
        <position position="149"/>
    </location>
    <ligand>
        <name>GTP</name>
        <dbReference type="ChEBI" id="CHEBI:37565"/>
    </ligand>
</feature>
<feature type="binding site" evidence="1">
    <location>
        <position position="154"/>
    </location>
    <ligand>
        <name>GTP</name>
        <dbReference type="ChEBI" id="CHEBI:37565"/>
    </ligand>
</feature>
<accession>B7MLV3</accession>
<proteinExistence type="inferred from homology"/>
<keyword id="KW-0342">GTP-binding</keyword>
<keyword id="KW-0378">Hydrolase</keyword>
<keyword id="KW-0479">Metal-binding</keyword>
<keyword id="KW-0547">Nucleotide-binding</keyword>
<keyword id="KW-1185">Reference proteome</keyword>
<keyword id="KW-0686">Riboflavin biosynthesis</keyword>
<keyword id="KW-0862">Zinc</keyword>
<name>RIBA_ECO45</name>
<dbReference type="EC" id="3.5.4.25" evidence="1"/>
<dbReference type="EMBL" id="CU928161">
    <property type="protein sequence ID" value="CAR02739.1"/>
    <property type="molecule type" value="Genomic_DNA"/>
</dbReference>
<dbReference type="RefSeq" id="WP_001176294.1">
    <property type="nucleotide sequence ID" value="NC_011742.1"/>
</dbReference>
<dbReference type="SMR" id="B7MLV3"/>
<dbReference type="KEGG" id="ecz:ECS88_1417"/>
<dbReference type="HOGENOM" id="CLU_020273_2_1_6"/>
<dbReference type="UniPathway" id="UPA00275">
    <property type="reaction ID" value="UER00400"/>
</dbReference>
<dbReference type="Proteomes" id="UP000000747">
    <property type="component" value="Chromosome"/>
</dbReference>
<dbReference type="GO" id="GO:0005829">
    <property type="term" value="C:cytosol"/>
    <property type="evidence" value="ECO:0007669"/>
    <property type="project" value="TreeGrafter"/>
</dbReference>
<dbReference type="GO" id="GO:0005525">
    <property type="term" value="F:GTP binding"/>
    <property type="evidence" value="ECO:0007669"/>
    <property type="project" value="UniProtKB-KW"/>
</dbReference>
<dbReference type="GO" id="GO:0003935">
    <property type="term" value="F:GTP cyclohydrolase II activity"/>
    <property type="evidence" value="ECO:0007669"/>
    <property type="project" value="UniProtKB-UniRule"/>
</dbReference>
<dbReference type="GO" id="GO:0008270">
    <property type="term" value="F:zinc ion binding"/>
    <property type="evidence" value="ECO:0007669"/>
    <property type="project" value="UniProtKB-UniRule"/>
</dbReference>
<dbReference type="GO" id="GO:0009231">
    <property type="term" value="P:riboflavin biosynthetic process"/>
    <property type="evidence" value="ECO:0007669"/>
    <property type="project" value="UniProtKB-UniRule"/>
</dbReference>
<dbReference type="CDD" id="cd00641">
    <property type="entry name" value="GTP_cyclohydro2"/>
    <property type="match status" value="1"/>
</dbReference>
<dbReference type="FunFam" id="3.40.50.10990:FF:000002">
    <property type="entry name" value="GTP cyclohydrolase-2"/>
    <property type="match status" value="1"/>
</dbReference>
<dbReference type="Gene3D" id="3.40.50.10990">
    <property type="entry name" value="GTP cyclohydrolase II"/>
    <property type="match status" value="1"/>
</dbReference>
<dbReference type="HAMAP" id="MF_00179">
    <property type="entry name" value="RibA"/>
    <property type="match status" value="1"/>
</dbReference>
<dbReference type="InterPro" id="IPR032677">
    <property type="entry name" value="GTP_cyclohydro_II"/>
</dbReference>
<dbReference type="InterPro" id="IPR000926">
    <property type="entry name" value="RibA"/>
</dbReference>
<dbReference type="InterPro" id="IPR036144">
    <property type="entry name" value="RibA-like_sf"/>
</dbReference>
<dbReference type="NCBIfam" id="NF001591">
    <property type="entry name" value="PRK00393.1"/>
    <property type="match status" value="1"/>
</dbReference>
<dbReference type="NCBIfam" id="TIGR00505">
    <property type="entry name" value="ribA"/>
    <property type="match status" value="1"/>
</dbReference>
<dbReference type="PANTHER" id="PTHR21327:SF18">
    <property type="entry name" value="3,4-DIHYDROXY-2-BUTANONE 4-PHOSPHATE SYNTHASE"/>
    <property type="match status" value="1"/>
</dbReference>
<dbReference type="PANTHER" id="PTHR21327">
    <property type="entry name" value="GTP CYCLOHYDROLASE II-RELATED"/>
    <property type="match status" value="1"/>
</dbReference>
<dbReference type="Pfam" id="PF00925">
    <property type="entry name" value="GTP_cyclohydro2"/>
    <property type="match status" value="1"/>
</dbReference>
<dbReference type="SUPFAM" id="SSF142695">
    <property type="entry name" value="RibA-like"/>
    <property type="match status" value="1"/>
</dbReference>
<comment type="function">
    <text evidence="1">Catalyzes the conversion of GTP to 2,5-diamino-6-ribosylamino-4(3H)-pyrimidinone 5'-phosphate (DARP), formate and pyrophosphate.</text>
</comment>
<comment type="catalytic activity">
    <reaction evidence="1">
        <text>GTP + 4 H2O = 2,5-diamino-6-hydroxy-4-(5-phosphoribosylamino)-pyrimidine + formate + 2 phosphate + 3 H(+)</text>
        <dbReference type="Rhea" id="RHEA:23704"/>
        <dbReference type="ChEBI" id="CHEBI:15377"/>
        <dbReference type="ChEBI" id="CHEBI:15378"/>
        <dbReference type="ChEBI" id="CHEBI:15740"/>
        <dbReference type="ChEBI" id="CHEBI:37565"/>
        <dbReference type="ChEBI" id="CHEBI:43474"/>
        <dbReference type="ChEBI" id="CHEBI:58614"/>
        <dbReference type="EC" id="3.5.4.25"/>
    </reaction>
</comment>
<comment type="cofactor">
    <cofactor evidence="1">
        <name>Zn(2+)</name>
        <dbReference type="ChEBI" id="CHEBI:29105"/>
    </cofactor>
    <text evidence="1">Binds 1 zinc ion per subunit.</text>
</comment>
<comment type="pathway">
    <text evidence="1">Cofactor biosynthesis; riboflavin biosynthesis; 5-amino-6-(D-ribitylamino)uracil from GTP: step 1/4.</text>
</comment>
<comment type="subunit">
    <text evidence="1">Homodimer.</text>
</comment>
<comment type="similarity">
    <text evidence="1">Belongs to the GTP cyclohydrolase II family.</text>
</comment>